<proteinExistence type="inferred from homology"/>
<dbReference type="EC" id="3.6.1.1" evidence="1"/>
<dbReference type="EMBL" id="AL591979">
    <property type="protein sequence ID" value="CAC99526.1"/>
    <property type="molecule type" value="Genomic_DNA"/>
</dbReference>
<dbReference type="PIR" id="AH1255">
    <property type="entry name" value="AH1255"/>
</dbReference>
<dbReference type="RefSeq" id="NP_464973.1">
    <property type="nucleotide sequence ID" value="NC_003210.1"/>
</dbReference>
<dbReference type="RefSeq" id="WP_003727434.1">
    <property type="nucleotide sequence ID" value="NZ_CP149495.1"/>
</dbReference>
<dbReference type="SMR" id="Q8Y757"/>
<dbReference type="STRING" id="169963.gene:17594105"/>
<dbReference type="PaxDb" id="169963-lmo1448"/>
<dbReference type="EnsemblBacteria" id="CAC99526">
    <property type="protein sequence ID" value="CAC99526"/>
    <property type="gene ID" value="CAC99526"/>
</dbReference>
<dbReference type="GeneID" id="986727"/>
<dbReference type="KEGG" id="lmo:lmo1448"/>
<dbReference type="PATRIC" id="fig|169963.11.peg.1487"/>
<dbReference type="eggNOG" id="COG1227">
    <property type="taxonomic scope" value="Bacteria"/>
</dbReference>
<dbReference type="HOGENOM" id="CLU_025243_0_1_9"/>
<dbReference type="OrthoDB" id="9766150at2"/>
<dbReference type="PhylomeDB" id="Q8Y757"/>
<dbReference type="BioCyc" id="LMON169963:LMO1448-MONOMER"/>
<dbReference type="Proteomes" id="UP000000817">
    <property type="component" value="Chromosome"/>
</dbReference>
<dbReference type="GO" id="GO:0005737">
    <property type="term" value="C:cytoplasm"/>
    <property type="evidence" value="ECO:0000318"/>
    <property type="project" value="GO_Central"/>
</dbReference>
<dbReference type="GO" id="GO:0004427">
    <property type="term" value="F:inorganic diphosphate phosphatase activity"/>
    <property type="evidence" value="ECO:0007669"/>
    <property type="project" value="UniProtKB-UniRule"/>
</dbReference>
<dbReference type="GO" id="GO:0030145">
    <property type="term" value="F:manganese ion binding"/>
    <property type="evidence" value="ECO:0007669"/>
    <property type="project" value="UniProtKB-UniRule"/>
</dbReference>
<dbReference type="FunFam" id="3.10.310.20:FF:000001">
    <property type="entry name" value="Probable manganese-dependent inorganic pyrophosphatase"/>
    <property type="match status" value="1"/>
</dbReference>
<dbReference type="FunFam" id="3.90.1640.10:FF:000001">
    <property type="entry name" value="Probable manganese-dependent inorganic pyrophosphatase"/>
    <property type="match status" value="1"/>
</dbReference>
<dbReference type="Gene3D" id="3.10.310.20">
    <property type="entry name" value="DHHA2 domain"/>
    <property type="match status" value="1"/>
</dbReference>
<dbReference type="Gene3D" id="3.90.1640.10">
    <property type="entry name" value="inorganic pyrophosphatase (n-terminal core)"/>
    <property type="match status" value="1"/>
</dbReference>
<dbReference type="HAMAP" id="MF_00207">
    <property type="entry name" value="PPase_C"/>
    <property type="match status" value="1"/>
</dbReference>
<dbReference type="InterPro" id="IPR001667">
    <property type="entry name" value="DDH_dom"/>
</dbReference>
<dbReference type="InterPro" id="IPR038763">
    <property type="entry name" value="DHH_sf"/>
</dbReference>
<dbReference type="InterPro" id="IPR004097">
    <property type="entry name" value="DHHA2"/>
</dbReference>
<dbReference type="InterPro" id="IPR038222">
    <property type="entry name" value="DHHA2_dom_sf"/>
</dbReference>
<dbReference type="InterPro" id="IPR022934">
    <property type="entry name" value="Mn-dep_inorganic_PyrPase"/>
</dbReference>
<dbReference type="NCBIfam" id="NF003877">
    <property type="entry name" value="PRK05427.1"/>
    <property type="match status" value="1"/>
</dbReference>
<dbReference type="PANTHER" id="PTHR12112">
    <property type="entry name" value="BNIP - RELATED"/>
    <property type="match status" value="1"/>
</dbReference>
<dbReference type="PANTHER" id="PTHR12112:SF22">
    <property type="entry name" value="MANGANESE-DEPENDENT INORGANIC PYROPHOSPHATASE-RELATED"/>
    <property type="match status" value="1"/>
</dbReference>
<dbReference type="Pfam" id="PF01368">
    <property type="entry name" value="DHH"/>
    <property type="match status" value="1"/>
</dbReference>
<dbReference type="Pfam" id="PF02833">
    <property type="entry name" value="DHHA2"/>
    <property type="match status" value="1"/>
</dbReference>
<dbReference type="SMART" id="SM01131">
    <property type="entry name" value="DHHA2"/>
    <property type="match status" value="1"/>
</dbReference>
<dbReference type="SUPFAM" id="SSF64182">
    <property type="entry name" value="DHH phosphoesterases"/>
    <property type="match status" value="1"/>
</dbReference>
<reference key="1">
    <citation type="journal article" date="2001" name="Science">
        <title>Comparative genomics of Listeria species.</title>
        <authorList>
            <person name="Glaser P."/>
            <person name="Frangeul L."/>
            <person name="Buchrieser C."/>
            <person name="Rusniok C."/>
            <person name="Amend A."/>
            <person name="Baquero F."/>
            <person name="Berche P."/>
            <person name="Bloecker H."/>
            <person name="Brandt P."/>
            <person name="Chakraborty T."/>
            <person name="Charbit A."/>
            <person name="Chetouani F."/>
            <person name="Couve E."/>
            <person name="de Daruvar A."/>
            <person name="Dehoux P."/>
            <person name="Domann E."/>
            <person name="Dominguez-Bernal G."/>
            <person name="Duchaud E."/>
            <person name="Durant L."/>
            <person name="Dussurget O."/>
            <person name="Entian K.-D."/>
            <person name="Fsihi H."/>
            <person name="Garcia-del Portillo F."/>
            <person name="Garrido P."/>
            <person name="Gautier L."/>
            <person name="Goebel W."/>
            <person name="Gomez-Lopez N."/>
            <person name="Hain T."/>
            <person name="Hauf J."/>
            <person name="Jackson D."/>
            <person name="Jones L.-M."/>
            <person name="Kaerst U."/>
            <person name="Kreft J."/>
            <person name="Kuhn M."/>
            <person name="Kunst F."/>
            <person name="Kurapkat G."/>
            <person name="Madueno E."/>
            <person name="Maitournam A."/>
            <person name="Mata Vicente J."/>
            <person name="Ng E."/>
            <person name="Nedjari H."/>
            <person name="Nordsiek G."/>
            <person name="Novella S."/>
            <person name="de Pablos B."/>
            <person name="Perez-Diaz J.-C."/>
            <person name="Purcell R."/>
            <person name="Remmel B."/>
            <person name="Rose M."/>
            <person name="Schlueter T."/>
            <person name="Simoes N."/>
            <person name="Tierrez A."/>
            <person name="Vazquez-Boland J.-A."/>
            <person name="Voss H."/>
            <person name="Wehland J."/>
            <person name="Cossart P."/>
        </authorList>
    </citation>
    <scope>NUCLEOTIDE SEQUENCE [LARGE SCALE GENOMIC DNA]</scope>
    <source>
        <strain>ATCC BAA-679 / EGD-e</strain>
    </source>
</reference>
<comment type="catalytic activity">
    <reaction evidence="1">
        <text>diphosphate + H2O = 2 phosphate + H(+)</text>
        <dbReference type="Rhea" id="RHEA:24576"/>
        <dbReference type="ChEBI" id="CHEBI:15377"/>
        <dbReference type="ChEBI" id="CHEBI:15378"/>
        <dbReference type="ChEBI" id="CHEBI:33019"/>
        <dbReference type="ChEBI" id="CHEBI:43474"/>
        <dbReference type="EC" id="3.6.1.1"/>
    </reaction>
</comment>
<comment type="cofactor">
    <cofactor evidence="1">
        <name>Mn(2+)</name>
        <dbReference type="ChEBI" id="CHEBI:29035"/>
    </cofactor>
    <text evidence="1">Binds 2 manganese ions per subunit.</text>
</comment>
<comment type="subcellular location">
    <subcellularLocation>
        <location evidence="1">Cytoplasm</location>
    </subcellularLocation>
</comment>
<comment type="similarity">
    <text evidence="1">Belongs to the PPase class C family.</text>
</comment>
<keyword id="KW-0963">Cytoplasm</keyword>
<keyword id="KW-0378">Hydrolase</keyword>
<keyword id="KW-0464">Manganese</keyword>
<keyword id="KW-0479">Metal-binding</keyword>
<keyword id="KW-1185">Reference proteome</keyword>
<gene>
    <name evidence="1" type="primary">ppaC</name>
    <name type="ordered locus">lmo1448</name>
</gene>
<sequence length="308" mass="33761">MTKTLVFGHKNPDTDTICSAISYAELKKAQGADIEAVRLGELNSETAFVLDYFQVTAPRLVQTVANEVSEVALVDHNERQQSVDDIDDVTVTAVVDHHRIANFETSDPLYYRAEPVGCTTTILLKMFRENEVEVSKTVAGLMLSAIISDTLLFQSPTCTEEDKVAAQKLAQIADVDIQSYGMEMLKAGADVSKKTVAELLLDAKEFNMNDNKVEIAQINVVDVNDVLSRRAEVEALMTQNIVDKGLDLYLFVITNILTNDSVGIAIGSKTAVVEEAYGVKFVENQAPLKGVVSRKKQVVPILTDTFAK</sequence>
<protein>
    <recommendedName>
        <fullName evidence="1">Probable manganese-dependent inorganic pyrophosphatase</fullName>
        <ecNumber evidence="1">3.6.1.1</ecNumber>
    </recommendedName>
    <alternativeName>
        <fullName evidence="1">Pyrophosphate phospho-hydrolase</fullName>
        <shortName evidence="1">PPase</shortName>
    </alternativeName>
</protein>
<organism>
    <name type="scientific">Listeria monocytogenes serovar 1/2a (strain ATCC BAA-679 / EGD-e)</name>
    <dbReference type="NCBI Taxonomy" id="169963"/>
    <lineage>
        <taxon>Bacteria</taxon>
        <taxon>Bacillati</taxon>
        <taxon>Bacillota</taxon>
        <taxon>Bacilli</taxon>
        <taxon>Bacillales</taxon>
        <taxon>Listeriaceae</taxon>
        <taxon>Listeria</taxon>
    </lineage>
</organism>
<evidence type="ECO:0000255" key="1">
    <source>
        <dbReference type="HAMAP-Rule" id="MF_00207"/>
    </source>
</evidence>
<feature type="chain" id="PRO_0000158577" description="Probable manganese-dependent inorganic pyrophosphatase">
    <location>
        <begin position="1"/>
        <end position="308"/>
    </location>
</feature>
<feature type="binding site" evidence="1">
    <location>
        <position position="9"/>
    </location>
    <ligand>
        <name>Mn(2+)</name>
        <dbReference type="ChEBI" id="CHEBI:29035"/>
        <label>1</label>
    </ligand>
</feature>
<feature type="binding site" evidence="1">
    <location>
        <position position="13"/>
    </location>
    <ligand>
        <name>Mn(2+)</name>
        <dbReference type="ChEBI" id="CHEBI:29035"/>
        <label>1</label>
    </ligand>
</feature>
<feature type="binding site" evidence="1">
    <location>
        <position position="15"/>
    </location>
    <ligand>
        <name>Mn(2+)</name>
        <dbReference type="ChEBI" id="CHEBI:29035"/>
        <label>2</label>
    </ligand>
</feature>
<feature type="binding site" evidence="1">
    <location>
        <position position="75"/>
    </location>
    <ligand>
        <name>Mn(2+)</name>
        <dbReference type="ChEBI" id="CHEBI:29035"/>
        <label>1</label>
    </ligand>
</feature>
<feature type="binding site" evidence="1">
    <location>
        <position position="75"/>
    </location>
    <ligand>
        <name>Mn(2+)</name>
        <dbReference type="ChEBI" id="CHEBI:29035"/>
        <label>2</label>
    </ligand>
</feature>
<feature type="binding site" evidence="1">
    <location>
        <position position="97"/>
    </location>
    <ligand>
        <name>Mn(2+)</name>
        <dbReference type="ChEBI" id="CHEBI:29035"/>
        <label>2</label>
    </ligand>
</feature>
<feature type="binding site" evidence="1">
    <location>
        <position position="149"/>
    </location>
    <ligand>
        <name>Mn(2+)</name>
        <dbReference type="ChEBI" id="CHEBI:29035"/>
        <label>2</label>
    </ligand>
</feature>
<accession>Q8Y757</accession>
<name>PPAC_LISMO</name>